<feature type="chain" id="PRO_1000058546" description="Diaminopimelate epimerase">
    <location>
        <begin position="1"/>
        <end position="259"/>
    </location>
</feature>
<feature type="active site" description="Proton donor" evidence="1">
    <location>
        <position position="69"/>
    </location>
</feature>
<feature type="active site" description="Proton acceptor" evidence="1">
    <location>
        <position position="211"/>
    </location>
</feature>
<feature type="binding site" evidence="1">
    <location>
        <position position="14"/>
    </location>
    <ligand>
        <name>substrate</name>
    </ligand>
</feature>
<feature type="binding site" evidence="1">
    <location>
        <position position="42"/>
    </location>
    <ligand>
        <name>substrate</name>
    </ligand>
</feature>
<feature type="binding site" evidence="1">
    <location>
        <position position="60"/>
    </location>
    <ligand>
        <name>substrate</name>
    </ligand>
</feature>
<feature type="binding site" evidence="1">
    <location>
        <begin position="70"/>
        <end position="71"/>
    </location>
    <ligand>
        <name>substrate</name>
    </ligand>
</feature>
<feature type="binding site" evidence="1">
    <location>
        <position position="151"/>
    </location>
    <ligand>
        <name>substrate</name>
    </ligand>
</feature>
<feature type="binding site" evidence="1">
    <location>
        <position position="184"/>
    </location>
    <ligand>
        <name>substrate</name>
    </ligand>
</feature>
<feature type="binding site" evidence="1">
    <location>
        <begin position="202"/>
        <end position="203"/>
    </location>
    <ligand>
        <name>substrate</name>
    </ligand>
</feature>
<feature type="binding site" evidence="1">
    <location>
        <begin position="212"/>
        <end position="213"/>
    </location>
    <ligand>
        <name>substrate</name>
    </ligand>
</feature>
<feature type="site" description="Could be important to modulate the pK values of the two catalytic cysteine residues" evidence="1">
    <location>
        <position position="153"/>
    </location>
</feature>
<feature type="site" description="Could be important to modulate the pK values of the two catalytic cysteine residues" evidence="1">
    <location>
        <position position="202"/>
    </location>
</feature>
<sequence length="259" mass="28565">MSSQSPKRMYGTGNNFVIIDSRSINNLNWNYREIANQNGCDQIIVITNSSAADCFMHIYNADGGEVEMCGNAARCVGYLIMSEKSTEYATIELVNKRILECFKVGGRSIKVNMGKPLFKWHEIPLSAKCDPLHLPIELEMLKDPVAVNIGNPHMVFFVDNISEIPLQSLGPKLEKHTLFPKKVNVNIAQVEKSGEISLRVWERGTGITASCGSAACAALIASVLRGYLITRQTSVNLPGGKLLIEWPDNIFMTGDIGFL</sequence>
<organism>
    <name type="scientific">Wolbachia sp. subsp. Brugia malayi (strain TRS)</name>
    <dbReference type="NCBI Taxonomy" id="292805"/>
    <lineage>
        <taxon>Bacteria</taxon>
        <taxon>Pseudomonadati</taxon>
        <taxon>Pseudomonadota</taxon>
        <taxon>Alphaproteobacteria</taxon>
        <taxon>Rickettsiales</taxon>
        <taxon>Anaplasmataceae</taxon>
        <taxon>Wolbachieae</taxon>
        <taxon>Wolbachia</taxon>
    </lineage>
</organism>
<dbReference type="EC" id="5.1.1.7" evidence="1"/>
<dbReference type="EMBL" id="AE017321">
    <property type="protein sequence ID" value="AAW71106.1"/>
    <property type="molecule type" value="Genomic_DNA"/>
</dbReference>
<dbReference type="RefSeq" id="WP_011256716.1">
    <property type="nucleotide sequence ID" value="NC_006833.1"/>
</dbReference>
<dbReference type="SMR" id="Q5GSB8"/>
<dbReference type="STRING" id="292805.Wbm0518"/>
<dbReference type="KEGG" id="wbm:Wbm0518"/>
<dbReference type="eggNOG" id="COG0253">
    <property type="taxonomic scope" value="Bacteria"/>
</dbReference>
<dbReference type="HOGENOM" id="CLU_053306_1_0_5"/>
<dbReference type="UniPathway" id="UPA00034">
    <property type="reaction ID" value="UER00025"/>
</dbReference>
<dbReference type="Proteomes" id="UP000000534">
    <property type="component" value="Chromosome"/>
</dbReference>
<dbReference type="GO" id="GO:0005829">
    <property type="term" value="C:cytosol"/>
    <property type="evidence" value="ECO:0007669"/>
    <property type="project" value="TreeGrafter"/>
</dbReference>
<dbReference type="GO" id="GO:0008837">
    <property type="term" value="F:diaminopimelate epimerase activity"/>
    <property type="evidence" value="ECO:0007669"/>
    <property type="project" value="UniProtKB-UniRule"/>
</dbReference>
<dbReference type="GO" id="GO:0009089">
    <property type="term" value="P:lysine biosynthetic process via diaminopimelate"/>
    <property type="evidence" value="ECO:0007669"/>
    <property type="project" value="UniProtKB-UniRule"/>
</dbReference>
<dbReference type="Gene3D" id="3.10.310.10">
    <property type="entry name" value="Diaminopimelate Epimerase, Chain A, domain 1"/>
    <property type="match status" value="2"/>
</dbReference>
<dbReference type="HAMAP" id="MF_00197">
    <property type="entry name" value="DAP_epimerase"/>
    <property type="match status" value="1"/>
</dbReference>
<dbReference type="InterPro" id="IPR018510">
    <property type="entry name" value="DAP_epimerase_AS"/>
</dbReference>
<dbReference type="InterPro" id="IPR001653">
    <property type="entry name" value="DAP_epimerase_DapF"/>
</dbReference>
<dbReference type="NCBIfam" id="TIGR00652">
    <property type="entry name" value="DapF"/>
    <property type="match status" value="1"/>
</dbReference>
<dbReference type="PANTHER" id="PTHR31689:SF0">
    <property type="entry name" value="DIAMINOPIMELATE EPIMERASE"/>
    <property type="match status" value="1"/>
</dbReference>
<dbReference type="PANTHER" id="PTHR31689">
    <property type="entry name" value="DIAMINOPIMELATE EPIMERASE, CHLOROPLASTIC"/>
    <property type="match status" value="1"/>
</dbReference>
<dbReference type="Pfam" id="PF01678">
    <property type="entry name" value="DAP_epimerase"/>
    <property type="match status" value="2"/>
</dbReference>
<dbReference type="SUPFAM" id="SSF54506">
    <property type="entry name" value="Diaminopimelate epimerase-like"/>
    <property type="match status" value="2"/>
</dbReference>
<dbReference type="PROSITE" id="PS01326">
    <property type="entry name" value="DAP_EPIMERASE"/>
    <property type="match status" value="1"/>
</dbReference>
<reference key="1">
    <citation type="journal article" date="2005" name="PLoS Biol.">
        <title>The Wolbachia genome of Brugia malayi: endosymbiont evolution within a human pathogenic nematode.</title>
        <authorList>
            <person name="Foster J."/>
            <person name="Ganatra M."/>
            <person name="Kamal I."/>
            <person name="Ware J."/>
            <person name="Makarova K."/>
            <person name="Ivanova N."/>
            <person name="Bhattacharyya A."/>
            <person name="Kapatral V."/>
            <person name="Kumar S."/>
            <person name="Posfai J."/>
            <person name="Vincze T."/>
            <person name="Ingram J."/>
            <person name="Moran L."/>
            <person name="Lapidus A."/>
            <person name="Omelchenko M."/>
            <person name="Kyrpides N."/>
            <person name="Ghedin E."/>
            <person name="Wang S."/>
            <person name="Goltsman E."/>
            <person name="Joukov V."/>
            <person name="Ostrovskaya O."/>
            <person name="Tsukerman K."/>
            <person name="Mazur M."/>
            <person name="Comb D."/>
            <person name="Koonin E."/>
            <person name="Slatko B."/>
        </authorList>
    </citation>
    <scope>NUCLEOTIDE SEQUENCE [LARGE SCALE GENOMIC DNA]</scope>
    <source>
        <strain>TRS</strain>
    </source>
</reference>
<proteinExistence type="inferred from homology"/>
<accession>Q5GSB8</accession>
<keyword id="KW-0028">Amino-acid biosynthesis</keyword>
<keyword id="KW-0963">Cytoplasm</keyword>
<keyword id="KW-0413">Isomerase</keyword>
<keyword id="KW-0457">Lysine biosynthesis</keyword>
<keyword id="KW-1185">Reference proteome</keyword>
<protein>
    <recommendedName>
        <fullName evidence="1">Diaminopimelate epimerase</fullName>
        <shortName evidence="1">DAP epimerase</shortName>
        <ecNumber evidence="1">5.1.1.7</ecNumber>
    </recommendedName>
    <alternativeName>
        <fullName evidence="1">PLP-independent amino acid racemase</fullName>
    </alternativeName>
</protein>
<gene>
    <name evidence="1" type="primary">dapF</name>
    <name type="ordered locus">Wbm0518</name>
</gene>
<comment type="function">
    <text evidence="1">Catalyzes the stereoinversion of LL-2,6-diaminopimelate (L,L-DAP) to meso-diaminopimelate (meso-DAP), a precursor of L-lysine and an essential component of the bacterial peptidoglycan.</text>
</comment>
<comment type="catalytic activity">
    <reaction evidence="1">
        <text>(2S,6S)-2,6-diaminopimelate = meso-2,6-diaminopimelate</text>
        <dbReference type="Rhea" id="RHEA:15393"/>
        <dbReference type="ChEBI" id="CHEBI:57609"/>
        <dbReference type="ChEBI" id="CHEBI:57791"/>
        <dbReference type="EC" id="5.1.1.7"/>
    </reaction>
</comment>
<comment type="pathway">
    <text evidence="1">Amino-acid biosynthesis; L-lysine biosynthesis via DAP pathway; DL-2,6-diaminopimelate from LL-2,6-diaminopimelate: step 1/1.</text>
</comment>
<comment type="subunit">
    <text evidence="1">Homodimer.</text>
</comment>
<comment type="subcellular location">
    <subcellularLocation>
        <location evidence="1">Cytoplasm</location>
    </subcellularLocation>
</comment>
<comment type="similarity">
    <text evidence="1">Belongs to the diaminopimelate epimerase family.</text>
</comment>
<evidence type="ECO:0000255" key="1">
    <source>
        <dbReference type="HAMAP-Rule" id="MF_00197"/>
    </source>
</evidence>
<name>DAPF_WOLTR</name>